<comment type="function">
    <text evidence="1">Cell wall formation.</text>
</comment>
<comment type="catalytic activity">
    <reaction evidence="1">
        <text>UDP-N-acetyl-alpha-D-muramate + NADP(+) = UDP-N-acetyl-3-O-(1-carboxyvinyl)-alpha-D-glucosamine + NADPH + H(+)</text>
        <dbReference type="Rhea" id="RHEA:12248"/>
        <dbReference type="ChEBI" id="CHEBI:15378"/>
        <dbReference type="ChEBI" id="CHEBI:57783"/>
        <dbReference type="ChEBI" id="CHEBI:58349"/>
        <dbReference type="ChEBI" id="CHEBI:68483"/>
        <dbReference type="ChEBI" id="CHEBI:70757"/>
        <dbReference type="EC" id="1.3.1.98"/>
    </reaction>
</comment>
<comment type="cofactor">
    <cofactor evidence="1">
        <name>FAD</name>
        <dbReference type="ChEBI" id="CHEBI:57692"/>
    </cofactor>
</comment>
<comment type="pathway">
    <text evidence="1">Cell wall biogenesis; peptidoglycan biosynthesis.</text>
</comment>
<comment type="subcellular location">
    <subcellularLocation>
        <location evidence="1">Cytoplasm</location>
    </subcellularLocation>
</comment>
<comment type="similarity">
    <text evidence="1">Belongs to the MurB family.</text>
</comment>
<gene>
    <name evidence="1" type="primary">murB</name>
    <name type="ordered locus">BOV_1386</name>
</gene>
<evidence type="ECO:0000255" key="1">
    <source>
        <dbReference type="HAMAP-Rule" id="MF_00037"/>
    </source>
</evidence>
<feature type="chain" id="PRO_1000002867" description="UDP-N-acetylenolpyruvoylglucosamine reductase">
    <location>
        <begin position="1"/>
        <end position="322"/>
    </location>
</feature>
<feature type="domain" description="FAD-binding PCMH-type" evidence="1">
    <location>
        <begin position="36"/>
        <end position="202"/>
    </location>
</feature>
<feature type="active site" evidence="1">
    <location>
        <position position="182"/>
    </location>
</feature>
<feature type="active site" description="Proton donor" evidence="1">
    <location>
        <position position="231"/>
    </location>
</feature>
<feature type="active site" evidence="1">
    <location>
        <position position="301"/>
    </location>
</feature>
<organism>
    <name type="scientific">Brucella ovis (strain ATCC 25840 / 63/290 / NCTC 10512)</name>
    <dbReference type="NCBI Taxonomy" id="444178"/>
    <lineage>
        <taxon>Bacteria</taxon>
        <taxon>Pseudomonadati</taxon>
        <taxon>Pseudomonadota</taxon>
        <taxon>Alphaproteobacteria</taxon>
        <taxon>Hyphomicrobiales</taxon>
        <taxon>Brucellaceae</taxon>
        <taxon>Brucella/Ochrobactrum group</taxon>
        <taxon>Brucella</taxon>
    </lineage>
</organism>
<proteinExistence type="evidence at protein level"/>
<reference key="1">
    <citation type="journal article" date="2009" name="PLoS ONE">
        <title>Genome degradation in Brucella ovis corresponds with narrowing of its host range and tissue tropism.</title>
        <authorList>
            <person name="Tsolis R.M."/>
            <person name="Seshadri R."/>
            <person name="Santos R.L."/>
            <person name="Sangari F.J."/>
            <person name="Lobo J.M."/>
            <person name="de Jong M.F."/>
            <person name="Ren Q."/>
            <person name="Myers G."/>
            <person name="Brinkac L.M."/>
            <person name="Nelson W.C."/>
            <person name="Deboy R.T."/>
            <person name="Angiuoli S."/>
            <person name="Khouri H."/>
            <person name="Dimitrov G."/>
            <person name="Robinson J.R."/>
            <person name="Mulligan S."/>
            <person name="Walker R.L."/>
            <person name="Elzer P.E."/>
            <person name="Hassan K.A."/>
            <person name="Paulsen I.T."/>
        </authorList>
    </citation>
    <scope>NUCLEOTIDE SEQUENCE [LARGE SCALE GENOMIC DNA]</scope>
    <source>
        <strain>ATCC 25840 / 63/290 / NCTC 10512</strain>
    </source>
</reference>
<sequence>MMESGEALLKKLDGRLSGLRGRLTPDTGMDKITWFRAGGPAQVLFQPSDEEDLSAFLKAVPEEIPLLVVGIGSNLLVRDGGVPGFVVRLSAKGFGEVEQVCDTQLRAGAAAPDKRVAAAALEAGLAGFHFYHGIPGGIGGALRMNAGANGVETRERVVEVRALDRKGEVHVLSNADMGYAYRHSSASPDLIFTSVLFEGVPGERDDIRRAMDEVQHHRETVQPVREKTGGSTFKNPEGTSAWKEIDKAGCRGLRVGGAQMSEMHCNFMINTGNATGHDLETLGETVRARVFENSGIRLHWEIKRLGLFREGEQIEEFLGKIV</sequence>
<accession>A5VRH5</accession>
<protein>
    <recommendedName>
        <fullName evidence="1">UDP-N-acetylenolpyruvoylglucosamine reductase</fullName>
        <ecNumber evidence="1">1.3.1.98</ecNumber>
    </recommendedName>
    <alternativeName>
        <fullName evidence="1">UDP-N-acetylmuramate dehydrogenase</fullName>
    </alternativeName>
</protein>
<keyword id="KW-0002">3D-structure</keyword>
<keyword id="KW-0131">Cell cycle</keyword>
<keyword id="KW-0132">Cell division</keyword>
<keyword id="KW-0133">Cell shape</keyword>
<keyword id="KW-0961">Cell wall biogenesis/degradation</keyword>
<keyword id="KW-0963">Cytoplasm</keyword>
<keyword id="KW-0274">FAD</keyword>
<keyword id="KW-0285">Flavoprotein</keyword>
<keyword id="KW-0521">NADP</keyword>
<keyword id="KW-0560">Oxidoreductase</keyword>
<keyword id="KW-0573">Peptidoglycan synthesis</keyword>
<name>MURB_BRUO2</name>
<dbReference type="EC" id="1.3.1.98" evidence="1"/>
<dbReference type="EMBL" id="CP000708">
    <property type="protein sequence ID" value="ABQ61769.1"/>
    <property type="molecule type" value="Genomic_DNA"/>
</dbReference>
<dbReference type="RefSeq" id="WP_004684020.1">
    <property type="nucleotide sequence ID" value="NC_009505.1"/>
</dbReference>
<dbReference type="PDB" id="9DTK">
    <property type="method" value="X-ray"/>
    <property type="resolution" value="2.27 A"/>
    <property type="chains" value="A=1-322"/>
</dbReference>
<dbReference type="PDBsum" id="9DTK"/>
<dbReference type="SMR" id="A5VRH5"/>
<dbReference type="GeneID" id="45124772"/>
<dbReference type="KEGG" id="bov:BOV_1386"/>
<dbReference type="HOGENOM" id="CLU_035304_1_0_5"/>
<dbReference type="PhylomeDB" id="A5VRH5"/>
<dbReference type="UniPathway" id="UPA00219"/>
<dbReference type="Proteomes" id="UP000006383">
    <property type="component" value="Chromosome I"/>
</dbReference>
<dbReference type="GO" id="GO:0005829">
    <property type="term" value="C:cytosol"/>
    <property type="evidence" value="ECO:0007669"/>
    <property type="project" value="TreeGrafter"/>
</dbReference>
<dbReference type="GO" id="GO:0071949">
    <property type="term" value="F:FAD binding"/>
    <property type="evidence" value="ECO:0007669"/>
    <property type="project" value="InterPro"/>
</dbReference>
<dbReference type="GO" id="GO:0008762">
    <property type="term" value="F:UDP-N-acetylmuramate dehydrogenase activity"/>
    <property type="evidence" value="ECO:0007669"/>
    <property type="project" value="UniProtKB-UniRule"/>
</dbReference>
<dbReference type="GO" id="GO:0051301">
    <property type="term" value="P:cell division"/>
    <property type="evidence" value="ECO:0007669"/>
    <property type="project" value="UniProtKB-KW"/>
</dbReference>
<dbReference type="GO" id="GO:0071555">
    <property type="term" value="P:cell wall organization"/>
    <property type="evidence" value="ECO:0007669"/>
    <property type="project" value="UniProtKB-KW"/>
</dbReference>
<dbReference type="GO" id="GO:0009252">
    <property type="term" value="P:peptidoglycan biosynthetic process"/>
    <property type="evidence" value="ECO:0007669"/>
    <property type="project" value="UniProtKB-UniRule"/>
</dbReference>
<dbReference type="GO" id="GO:0008360">
    <property type="term" value="P:regulation of cell shape"/>
    <property type="evidence" value="ECO:0007669"/>
    <property type="project" value="UniProtKB-KW"/>
</dbReference>
<dbReference type="Gene3D" id="3.30.465.10">
    <property type="match status" value="1"/>
</dbReference>
<dbReference type="Gene3D" id="3.90.78.10">
    <property type="entry name" value="UDP-N-acetylenolpyruvoylglucosamine reductase, C-terminal domain"/>
    <property type="match status" value="1"/>
</dbReference>
<dbReference type="Gene3D" id="3.30.43.10">
    <property type="entry name" value="Uridine Diphospho-n-acetylenolpyruvylglucosamine Reductase, domain 2"/>
    <property type="match status" value="1"/>
</dbReference>
<dbReference type="HAMAP" id="MF_00037">
    <property type="entry name" value="MurB"/>
    <property type="match status" value="1"/>
</dbReference>
<dbReference type="InterPro" id="IPR016166">
    <property type="entry name" value="FAD-bd_PCMH"/>
</dbReference>
<dbReference type="InterPro" id="IPR036318">
    <property type="entry name" value="FAD-bd_PCMH-like_sf"/>
</dbReference>
<dbReference type="InterPro" id="IPR016167">
    <property type="entry name" value="FAD-bd_PCMH_sub1"/>
</dbReference>
<dbReference type="InterPro" id="IPR016169">
    <property type="entry name" value="FAD-bd_PCMH_sub2"/>
</dbReference>
<dbReference type="InterPro" id="IPR003170">
    <property type="entry name" value="MurB"/>
</dbReference>
<dbReference type="InterPro" id="IPR011601">
    <property type="entry name" value="MurB_C"/>
</dbReference>
<dbReference type="InterPro" id="IPR036635">
    <property type="entry name" value="MurB_C_sf"/>
</dbReference>
<dbReference type="InterPro" id="IPR006094">
    <property type="entry name" value="Oxid_FAD_bind_N"/>
</dbReference>
<dbReference type="NCBIfam" id="TIGR00179">
    <property type="entry name" value="murB"/>
    <property type="match status" value="1"/>
</dbReference>
<dbReference type="NCBIfam" id="NF010480">
    <property type="entry name" value="PRK13905.1"/>
    <property type="match status" value="1"/>
</dbReference>
<dbReference type="PANTHER" id="PTHR21071">
    <property type="entry name" value="UDP-N-ACETYLENOLPYRUVOYLGLUCOSAMINE REDUCTASE"/>
    <property type="match status" value="1"/>
</dbReference>
<dbReference type="PANTHER" id="PTHR21071:SF4">
    <property type="entry name" value="UDP-N-ACETYLENOLPYRUVOYLGLUCOSAMINE REDUCTASE"/>
    <property type="match status" value="1"/>
</dbReference>
<dbReference type="Pfam" id="PF01565">
    <property type="entry name" value="FAD_binding_4"/>
    <property type="match status" value="1"/>
</dbReference>
<dbReference type="Pfam" id="PF02873">
    <property type="entry name" value="MurB_C"/>
    <property type="match status" value="1"/>
</dbReference>
<dbReference type="SUPFAM" id="SSF56176">
    <property type="entry name" value="FAD-binding/transporter-associated domain-like"/>
    <property type="match status" value="1"/>
</dbReference>
<dbReference type="SUPFAM" id="SSF56194">
    <property type="entry name" value="Uridine diphospho-N-Acetylenolpyruvylglucosamine reductase, MurB, C-terminal domain"/>
    <property type="match status" value="1"/>
</dbReference>
<dbReference type="PROSITE" id="PS51387">
    <property type="entry name" value="FAD_PCMH"/>
    <property type="match status" value="1"/>
</dbReference>